<feature type="chain" id="PRO_1000009131" description="N-acetylmuramic acid 6-phosphate etherase">
    <location>
        <begin position="1"/>
        <end position="299"/>
    </location>
</feature>
<feature type="domain" description="SIS" evidence="1">
    <location>
        <begin position="57"/>
        <end position="220"/>
    </location>
</feature>
<feature type="active site" description="Proton donor" evidence="1">
    <location>
        <position position="85"/>
    </location>
</feature>
<feature type="active site" evidence="1">
    <location>
        <position position="116"/>
    </location>
</feature>
<dbReference type="EC" id="4.2.1.126" evidence="1"/>
<dbReference type="EMBL" id="CP000510">
    <property type="protein sequence ID" value="ABM02904.1"/>
    <property type="molecule type" value="Genomic_DNA"/>
</dbReference>
<dbReference type="RefSeq" id="WP_011769467.1">
    <property type="nucleotide sequence ID" value="NC_008709.1"/>
</dbReference>
<dbReference type="SMR" id="A1STT9"/>
<dbReference type="STRING" id="357804.Ping_1065"/>
<dbReference type="KEGG" id="pin:Ping_1065"/>
<dbReference type="eggNOG" id="COG2103">
    <property type="taxonomic scope" value="Bacteria"/>
</dbReference>
<dbReference type="HOGENOM" id="CLU_049049_1_1_6"/>
<dbReference type="OrthoDB" id="9813395at2"/>
<dbReference type="UniPathway" id="UPA00342"/>
<dbReference type="UniPathway" id="UPA00343"/>
<dbReference type="UniPathway" id="UPA00544"/>
<dbReference type="Proteomes" id="UP000000639">
    <property type="component" value="Chromosome"/>
</dbReference>
<dbReference type="GO" id="GO:0097367">
    <property type="term" value="F:carbohydrate derivative binding"/>
    <property type="evidence" value="ECO:0007669"/>
    <property type="project" value="InterPro"/>
</dbReference>
<dbReference type="GO" id="GO:0016835">
    <property type="term" value="F:carbon-oxygen lyase activity"/>
    <property type="evidence" value="ECO:0007669"/>
    <property type="project" value="UniProtKB-UniRule"/>
</dbReference>
<dbReference type="GO" id="GO:0016803">
    <property type="term" value="F:ether hydrolase activity"/>
    <property type="evidence" value="ECO:0007669"/>
    <property type="project" value="TreeGrafter"/>
</dbReference>
<dbReference type="GO" id="GO:0097175">
    <property type="term" value="P:1,6-anhydro-N-acetyl-beta-muramic acid catabolic process"/>
    <property type="evidence" value="ECO:0007669"/>
    <property type="project" value="UniProtKB-UniRule"/>
</dbReference>
<dbReference type="GO" id="GO:0046348">
    <property type="term" value="P:amino sugar catabolic process"/>
    <property type="evidence" value="ECO:0007669"/>
    <property type="project" value="InterPro"/>
</dbReference>
<dbReference type="GO" id="GO:0097173">
    <property type="term" value="P:N-acetylmuramic acid catabolic process"/>
    <property type="evidence" value="ECO:0007669"/>
    <property type="project" value="UniProtKB-UniPathway"/>
</dbReference>
<dbReference type="GO" id="GO:0009254">
    <property type="term" value="P:peptidoglycan turnover"/>
    <property type="evidence" value="ECO:0007669"/>
    <property type="project" value="UniProtKB-UniRule"/>
</dbReference>
<dbReference type="CDD" id="cd05007">
    <property type="entry name" value="SIS_Etherase"/>
    <property type="match status" value="1"/>
</dbReference>
<dbReference type="FunFam" id="1.10.8.1080:FF:000001">
    <property type="entry name" value="N-acetylmuramic acid 6-phosphate etherase"/>
    <property type="match status" value="1"/>
</dbReference>
<dbReference type="FunFam" id="3.40.50.10490:FF:000014">
    <property type="entry name" value="N-acetylmuramic acid 6-phosphate etherase"/>
    <property type="match status" value="1"/>
</dbReference>
<dbReference type="Gene3D" id="1.10.8.1080">
    <property type="match status" value="1"/>
</dbReference>
<dbReference type="Gene3D" id="3.40.50.10490">
    <property type="entry name" value="Glucose-6-phosphate isomerase like protein, domain 1"/>
    <property type="match status" value="1"/>
</dbReference>
<dbReference type="HAMAP" id="MF_00068">
    <property type="entry name" value="MurQ"/>
    <property type="match status" value="1"/>
</dbReference>
<dbReference type="InterPro" id="IPR005488">
    <property type="entry name" value="Etherase_MurQ"/>
</dbReference>
<dbReference type="InterPro" id="IPR005486">
    <property type="entry name" value="Glucokinase_regulatory_CS"/>
</dbReference>
<dbReference type="InterPro" id="IPR040190">
    <property type="entry name" value="MURQ/GCKR"/>
</dbReference>
<dbReference type="InterPro" id="IPR001347">
    <property type="entry name" value="SIS_dom"/>
</dbReference>
<dbReference type="InterPro" id="IPR046348">
    <property type="entry name" value="SIS_dom_sf"/>
</dbReference>
<dbReference type="NCBIfam" id="TIGR00274">
    <property type="entry name" value="N-acetylmuramic acid 6-phosphate etherase"/>
    <property type="match status" value="1"/>
</dbReference>
<dbReference type="NCBIfam" id="NF003915">
    <property type="entry name" value="PRK05441.1"/>
    <property type="match status" value="1"/>
</dbReference>
<dbReference type="NCBIfam" id="NF009222">
    <property type="entry name" value="PRK12570.1"/>
    <property type="match status" value="1"/>
</dbReference>
<dbReference type="PANTHER" id="PTHR10088">
    <property type="entry name" value="GLUCOKINASE REGULATORY PROTEIN"/>
    <property type="match status" value="1"/>
</dbReference>
<dbReference type="PANTHER" id="PTHR10088:SF4">
    <property type="entry name" value="GLUCOKINASE REGULATORY PROTEIN"/>
    <property type="match status" value="1"/>
</dbReference>
<dbReference type="Pfam" id="PF22645">
    <property type="entry name" value="GKRP_SIS_N"/>
    <property type="match status" value="1"/>
</dbReference>
<dbReference type="SUPFAM" id="SSF53697">
    <property type="entry name" value="SIS domain"/>
    <property type="match status" value="1"/>
</dbReference>
<dbReference type="PROSITE" id="PS01272">
    <property type="entry name" value="GCKR"/>
    <property type="match status" value="1"/>
</dbReference>
<dbReference type="PROSITE" id="PS51464">
    <property type="entry name" value="SIS"/>
    <property type="match status" value="1"/>
</dbReference>
<keyword id="KW-0119">Carbohydrate metabolism</keyword>
<keyword id="KW-0456">Lyase</keyword>
<keyword id="KW-1185">Reference proteome</keyword>
<comment type="function">
    <text evidence="1">Specifically catalyzes the cleavage of the D-lactyl ether substituent of MurNAc 6-phosphate, producing GlcNAc 6-phosphate and D-lactate. Together with AnmK, is also required for the utilization of anhydro-N-acetylmuramic acid (anhMurNAc) either imported from the medium or derived from its own cell wall murein, and thus plays a role in cell wall recycling.</text>
</comment>
<comment type="catalytic activity">
    <reaction evidence="1">
        <text>N-acetyl-D-muramate 6-phosphate + H2O = N-acetyl-D-glucosamine 6-phosphate + (R)-lactate</text>
        <dbReference type="Rhea" id="RHEA:26410"/>
        <dbReference type="ChEBI" id="CHEBI:15377"/>
        <dbReference type="ChEBI" id="CHEBI:16004"/>
        <dbReference type="ChEBI" id="CHEBI:57513"/>
        <dbReference type="ChEBI" id="CHEBI:58722"/>
        <dbReference type="EC" id="4.2.1.126"/>
    </reaction>
</comment>
<comment type="pathway">
    <text evidence="1">Amino-sugar metabolism; 1,6-anhydro-N-acetylmuramate degradation.</text>
</comment>
<comment type="pathway">
    <text evidence="1">Amino-sugar metabolism; N-acetylmuramate degradation.</text>
</comment>
<comment type="pathway">
    <text evidence="1">Cell wall biogenesis; peptidoglycan recycling.</text>
</comment>
<comment type="subunit">
    <text evidence="1">Homodimer.</text>
</comment>
<comment type="miscellaneous">
    <text evidence="1">A lyase-type mechanism (elimination/hydration) is suggested for the cleavage of the lactyl ether bond of MurNAc 6-phosphate, with the formation of an alpha,beta-unsaturated aldehyde intermediate with (E)-stereochemistry, followed by the syn addition of water to give product.</text>
</comment>
<comment type="similarity">
    <text evidence="1">Belongs to the GCKR-like family. MurNAc-6-P etherase subfamily.</text>
</comment>
<evidence type="ECO:0000255" key="1">
    <source>
        <dbReference type="HAMAP-Rule" id="MF_00068"/>
    </source>
</evidence>
<sequence>MSAPPENLMTESRNPASSHIDTLSTLEMLKVMNAEDKKVALAVELALPSITQAVDLISAAFHKKGRLIYCGAGTSGRLGILDASECPPTFGTPAKQVMALIAGGHRAILKAVENAEDNLQAGQSDLQNINFNENDILVGIAASGSTPYVIGAMRYAKSINAQVIAINCNPNSLMSKECDVNICAVVGPEVLTGSSRLKAGTAQKLILNMLTTGAMIRTGKVFGNLMVDVQATNAKLVERQKMIVIAATDCLREEAEKALLQCNGHCKTAIVMILTNTNTAQAKSLLAKNNGYIRQSIVK</sequence>
<name>MURQ_PSYIN</name>
<organism>
    <name type="scientific">Psychromonas ingrahamii (strain DSM 17664 / CCUG 51855 / 37)</name>
    <dbReference type="NCBI Taxonomy" id="357804"/>
    <lineage>
        <taxon>Bacteria</taxon>
        <taxon>Pseudomonadati</taxon>
        <taxon>Pseudomonadota</taxon>
        <taxon>Gammaproteobacteria</taxon>
        <taxon>Alteromonadales</taxon>
        <taxon>Psychromonadaceae</taxon>
        <taxon>Psychromonas</taxon>
    </lineage>
</organism>
<reference key="1">
    <citation type="journal article" date="2008" name="BMC Genomics">
        <title>Genomics of an extreme psychrophile, Psychromonas ingrahamii.</title>
        <authorList>
            <person name="Riley M."/>
            <person name="Staley J.T."/>
            <person name="Danchin A."/>
            <person name="Wang T.Z."/>
            <person name="Brettin T.S."/>
            <person name="Hauser L.J."/>
            <person name="Land M.L."/>
            <person name="Thompson L.S."/>
        </authorList>
    </citation>
    <scope>NUCLEOTIDE SEQUENCE [LARGE SCALE GENOMIC DNA]</scope>
    <source>
        <strain>DSM 17664 / CCUG 51855 / 37</strain>
    </source>
</reference>
<protein>
    <recommendedName>
        <fullName evidence="1">N-acetylmuramic acid 6-phosphate etherase</fullName>
        <shortName evidence="1">MurNAc-6-P etherase</shortName>
        <ecNumber evidence="1">4.2.1.126</ecNumber>
    </recommendedName>
    <alternativeName>
        <fullName evidence="1">N-acetylmuramic acid 6-phosphate hydrolase</fullName>
    </alternativeName>
    <alternativeName>
        <fullName evidence="1">N-acetylmuramic acid 6-phosphate lyase</fullName>
    </alternativeName>
</protein>
<gene>
    <name evidence="1" type="primary">murQ</name>
    <name type="ordered locus">Ping_1065</name>
</gene>
<proteinExistence type="inferred from homology"/>
<accession>A1STT9</accession>